<reference key="1">
    <citation type="journal article" date="1995" name="Science">
        <title>Whole-genome random sequencing and assembly of Haemophilus influenzae Rd.</title>
        <authorList>
            <person name="Fleischmann R.D."/>
            <person name="Adams M.D."/>
            <person name="White O."/>
            <person name="Clayton R.A."/>
            <person name="Kirkness E.F."/>
            <person name="Kerlavage A.R."/>
            <person name="Bult C.J."/>
            <person name="Tomb J.-F."/>
            <person name="Dougherty B.A."/>
            <person name="Merrick J.M."/>
            <person name="McKenney K."/>
            <person name="Sutton G.G."/>
            <person name="FitzHugh W."/>
            <person name="Fields C.A."/>
            <person name="Gocayne J.D."/>
            <person name="Scott J.D."/>
            <person name="Shirley R."/>
            <person name="Liu L.-I."/>
            <person name="Glodek A."/>
            <person name="Kelley J.M."/>
            <person name="Weidman J.F."/>
            <person name="Phillips C.A."/>
            <person name="Spriggs T."/>
            <person name="Hedblom E."/>
            <person name="Cotton M.D."/>
            <person name="Utterback T.R."/>
            <person name="Hanna M.C."/>
            <person name="Nguyen D.T."/>
            <person name="Saudek D.M."/>
            <person name="Brandon R.C."/>
            <person name="Fine L.D."/>
            <person name="Fritchman J.L."/>
            <person name="Fuhrmann J.L."/>
            <person name="Geoghagen N.S.M."/>
            <person name="Gnehm C.L."/>
            <person name="McDonald L.A."/>
            <person name="Small K.V."/>
            <person name="Fraser C.M."/>
            <person name="Smith H.O."/>
            <person name="Venter J.C."/>
        </authorList>
    </citation>
    <scope>NUCLEOTIDE SEQUENCE [LARGE SCALE GENOMIC DNA]</scope>
    <source>
        <strain>ATCC 51907 / DSM 11121 / KW20 / Rd</strain>
    </source>
</reference>
<protein>
    <recommendedName>
        <fullName>Putative uncharacterized protein HI_1485 in Mu-like prophage FluMu region</fullName>
    </recommendedName>
</protein>
<name>Y1485_HAEIN</name>
<comment type="caution">
    <text evidence="1">Could be the product of a pseudogene.</text>
</comment>
<proteinExistence type="uncertain"/>
<organism>
    <name type="scientific">Haemophilus influenzae (strain ATCC 51907 / DSM 11121 / KW20 / Rd)</name>
    <dbReference type="NCBI Taxonomy" id="71421"/>
    <lineage>
        <taxon>Bacteria</taxon>
        <taxon>Pseudomonadati</taxon>
        <taxon>Pseudomonadota</taxon>
        <taxon>Gammaproteobacteria</taxon>
        <taxon>Pasteurellales</taxon>
        <taxon>Pasteurellaceae</taxon>
        <taxon>Haemophilus</taxon>
    </lineage>
</organism>
<evidence type="ECO:0000305" key="1"/>
<sequence>MKTKRPHAKSVENFNRYRFYAEKAAKEEQAGNYEEAETHWDLAMLSASPENKEWAIRRRDFCQRMHQRPFEGE</sequence>
<accession>P44212</accession>
<feature type="chain" id="PRO_0000078069" description="Putative uncharacterized protein HI_1485 in Mu-like prophage FluMu region">
    <location>
        <begin position="1"/>
        <end position="73"/>
    </location>
</feature>
<dbReference type="EMBL" id="L42023">
    <property type="protein sequence ID" value="AAC23140.1"/>
    <property type="molecule type" value="Genomic_DNA"/>
</dbReference>
<dbReference type="PIR" id="F64031">
    <property type="entry name" value="F64031"/>
</dbReference>
<dbReference type="RefSeq" id="NP_439635.1">
    <property type="nucleotide sequence ID" value="NC_000907.1"/>
</dbReference>
<dbReference type="SMR" id="P44212"/>
<dbReference type="STRING" id="71421.HI_1485"/>
<dbReference type="EnsemblBacteria" id="AAC23140">
    <property type="protein sequence ID" value="AAC23140"/>
    <property type="gene ID" value="HI_1485"/>
</dbReference>
<dbReference type="KEGG" id="hin:HI_1485"/>
<dbReference type="PATRIC" id="fig|71421.8.peg.1553"/>
<dbReference type="eggNOG" id="COG4396">
    <property type="taxonomic scope" value="Bacteria"/>
</dbReference>
<dbReference type="HOGENOM" id="CLU_194462_0_0_6"/>
<dbReference type="OrthoDB" id="5690455at2"/>
<dbReference type="BioCyc" id="HINF71421:G1GJ1-1509-MONOMER"/>
<dbReference type="Proteomes" id="UP000000579">
    <property type="component" value="Chromosome"/>
</dbReference>
<dbReference type="InterPro" id="IPR047666">
    <property type="entry name" value="ANR_neg_reg"/>
</dbReference>
<dbReference type="NCBIfam" id="NF033650">
    <property type="entry name" value="ANR_neg_reg"/>
    <property type="match status" value="1"/>
</dbReference>
<gene>
    <name type="ordered locus">HI_1485</name>
</gene>
<keyword id="KW-1185">Reference proteome</keyword>